<proteinExistence type="evidence at protein level"/>
<dbReference type="EMBL" id="AF077407">
    <property type="protein sequence ID" value="AAC26230.1"/>
    <property type="status" value="ALT_SEQ"/>
    <property type="molecule type" value="Genomic_DNA"/>
</dbReference>
<dbReference type="EMBL" id="CP002688">
    <property type="protein sequence ID" value="AED93537.1"/>
    <property type="molecule type" value="Genomic_DNA"/>
</dbReference>
<dbReference type="EMBL" id="BT024475">
    <property type="protein sequence ID" value="ABD19656.1"/>
    <property type="molecule type" value="mRNA"/>
</dbReference>
<dbReference type="EMBL" id="AK226367">
    <property type="protein sequence ID" value="BAE98515.1"/>
    <property type="molecule type" value="mRNA"/>
</dbReference>
<dbReference type="EMBL" id="AB493760">
    <property type="protein sequence ID" value="BAH30598.1"/>
    <property type="molecule type" value="mRNA"/>
</dbReference>
<dbReference type="EMBL" id="AY087173">
    <property type="protein sequence ID" value="AAM64729.1"/>
    <property type="molecule type" value="mRNA"/>
</dbReference>
<dbReference type="PIR" id="T01840">
    <property type="entry name" value="T01840"/>
</dbReference>
<dbReference type="RefSeq" id="NP_197993.1">
    <property type="nucleotide sequence ID" value="NM_122522.5"/>
</dbReference>
<dbReference type="PDB" id="1WE9">
    <property type="method" value="NMR"/>
    <property type="chains" value="A=201-251"/>
</dbReference>
<dbReference type="PDBsum" id="1WE9"/>
<dbReference type="SMR" id="O81488"/>
<dbReference type="BioGRID" id="17965">
    <property type="interactions" value="9"/>
</dbReference>
<dbReference type="FunCoup" id="O81488">
    <property type="interactions" value="263"/>
</dbReference>
<dbReference type="STRING" id="3702.O81488"/>
<dbReference type="iPTMnet" id="O81488"/>
<dbReference type="PaxDb" id="3702-AT5G26210.1"/>
<dbReference type="ProteomicsDB" id="244852"/>
<dbReference type="EnsemblPlants" id="AT5G26210.1">
    <property type="protein sequence ID" value="AT5G26210.1"/>
    <property type="gene ID" value="AT5G26210"/>
</dbReference>
<dbReference type="GeneID" id="832690"/>
<dbReference type="Gramene" id="AT5G26210.1">
    <property type="protein sequence ID" value="AT5G26210.1"/>
    <property type="gene ID" value="AT5G26210"/>
</dbReference>
<dbReference type="KEGG" id="ath:AT5G26210"/>
<dbReference type="Araport" id="AT5G26210"/>
<dbReference type="TAIR" id="AT5G26210">
    <property type="gene designation" value="AL4"/>
</dbReference>
<dbReference type="eggNOG" id="KOG1632">
    <property type="taxonomic scope" value="Eukaryota"/>
</dbReference>
<dbReference type="HOGENOM" id="CLU_058315_1_0_1"/>
<dbReference type="InParanoid" id="O81488"/>
<dbReference type="OMA" id="CKMPIIL"/>
<dbReference type="OrthoDB" id="436852at2759"/>
<dbReference type="PhylomeDB" id="O81488"/>
<dbReference type="CD-CODE" id="4299E36E">
    <property type="entry name" value="Nucleolus"/>
</dbReference>
<dbReference type="EvolutionaryTrace" id="O81488"/>
<dbReference type="PRO" id="PR:O81488"/>
<dbReference type="Proteomes" id="UP000006548">
    <property type="component" value="Chromosome 5"/>
</dbReference>
<dbReference type="ExpressionAtlas" id="O81488">
    <property type="expression patterns" value="baseline and differential"/>
</dbReference>
<dbReference type="GO" id="GO:0005634">
    <property type="term" value="C:nucleus"/>
    <property type="evidence" value="ECO:0000314"/>
    <property type="project" value="TAIR"/>
</dbReference>
<dbReference type="GO" id="GO:0035064">
    <property type="term" value="F:methylated histone binding"/>
    <property type="evidence" value="ECO:0000314"/>
    <property type="project" value="TAIR"/>
</dbReference>
<dbReference type="GO" id="GO:0000976">
    <property type="term" value="F:transcription cis-regulatory region binding"/>
    <property type="evidence" value="ECO:0000353"/>
    <property type="project" value="TAIR"/>
</dbReference>
<dbReference type="GO" id="GO:0008270">
    <property type="term" value="F:zinc ion binding"/>
    <property type="evidence" value="ECO:0007669"/>
    <property type="project" value="UniProtKB-KW"/>
</dbReference>
<dbReference type="GO" id="GO:0006325">
    <property type="term" value="P:chromatin organization"/>
    <property type="evidence" value="ECO:0007669"/>
    <property type="project" value="UniProtKB-KW"/>
</dbReference>
<dbReference type="GO" id="GO:0006355">
    <property type="term" value="P:regulation of DNA-templated transcription"/>
    <property type="evidence" value="ECO:0007669"/>
    <property type="project" value="InterPro"/>
</dbReference>
<dbReference type="CDD" id="cd15613">
    <property type="entry name" value="PHD_AL_plant"/>
    <property type="match status" value="1"/>
</dbReference>
<dbReference type="FunFam" id="3.30.40.10:FF:000306">
    <property type="entry name" value="PHD finger alfin-like protein"/>
    <property type="match status" value="1"/>
</dbReference>
<dbReference type="Gene3D" id="3.30.40.10">
    <property type="entry name" value="Zinc/RING finger domain, C3HC4 (zinc finger)"/>
    <property type="match status" value="1"/>
</dbReference>
<dbReference type="InterPro" id="IPR045104">
    <property type="entry name" value="Alfin"/>
</dbReference>
<dbReference type="InterPro" id="IPR021998">
    <property type="entry name" value="Alfin_N"/>
</dbReference>
<dbReference type="InterPro" id="IPR044104">
    <property type="entry name" value="PHD_AL_plant"/>
</dbReference>
<dbReference type="InterPro" id="IPR019786">
    <property type="entry name" value="Zinc_finger_PHD-type_CS"/>
</dbReference>
<dbReference type="InterPro" id="IPR011011">
    <property type="entry name" value="Znf_FYVE_PHD"/>
</dbReference>
<dbReference type="InterPro" id="IPR001965">
    <property type="entry name" value="Znf_PHD"/>
</dbReference>
<dbReference type="InterPro" id="IPR019787">
    <property type="entry name" value="Znf_PHD-finger"/>
</dbReference>
<dbReference type="InterPro" id="IPR013083">
    <property type="entry name" value="Znf_RING/FYVE/PHD"/>
</dbReference>
<dbReference type="PANTHER" id="PTHR12321">
    <property type="entry name" value="CPG BINDING PROTEIN"/>
    <property type="match status" value="1"/>
</dbReference>
<dbReference type="PANTHER" id="PTHR12321:SF182">
    <property type="entry name" value="PHD FINGER PROTEIN ALFIN-LIKE 4"/>
    <property type="match status" value="1"/>
</dbReference>
<dbReference type="Pfam" id="PF12165">
    <property type="entry name" value="Alfin"/>
    <property type="match status" value="1"/>
</dbReference>
<dbReference type="Pfam" id="PF00628">
    <property type="entry name" value="PHD"/>
    <property type="match status" value="1"/>
</dbReference>
<dbReference type="SMART" id="SM00249">
    <property type="entry name" value="PHD"/>
    <property type="match status" value="1"/>
</dbReference>
<dbReference type="SUPFAM" id="SSF57903">
    <property type="entry name" value="FYVE/PHD zinc finger"/>
    <property type="match status" value="1"/>
</dbReference>
<dbReference type="PROSITE" id="PS01359">
    <property type="entry name" value="ZF_PHD_1"/>
    <property type="match status" value="1"/>
</dbReference>
<dbReference type="PROSITE" id="PS50016">
    <property type="entry name" value="ZF_PHD_2"/>
    <property type="match status" value="1"/>
</dbReference>
<keyword id="KW-0002">3D-structure</keyword>
<keyword id="KW-0007">Acetylation</keyword>
<keyword id="KW-0156">Chromatin regulator</keyword>
<keyword id="KW-0479">Metal-binding</keyword>
<keyword id="KW-0539">Nucleus</keyword>
<keyword id="KW-1185">Reference proteome</keyword>
<keyword id="KW-0804">Transcription</keyword>
<keyword id="KW-0805">Transcription regulation</keyword>
<keyword id="KW-0862">Zinc</keyword>
<keyword id="KW-0863">Zinc-finger</keyword>
<evidence type="ECO:0000250" key="1"/>
<evidence type="ECO:0000255" key="2">
    <source>
        <dbReference type="PROSITE-ProRule" id="PRU00146"/>
    </source>
</evidence>
<evidence type="ECO:0000256" key="3">
    <source>
        <dbReference type="SAM" id="MobiDB-lite"/>
    </source>
</evidence>
<evidence type="ECO:0000269" key="4">
    <source>
    </source>
</evidence>
<evidence type="ECO:0000305" key="5"/>
<evidence type="ECO:0007744" key="6">
    <source>
    </source>
</evidence>
<evidence type="ECO:0007829" key="7">
    <source>
        <dbReference type="PDB" id="1WE9"/>
    </source>
</evidence>
<name>ALFL4_ARATH</name>
<gene>
    <name type="primary">AL4</name>
    <name type="ordered locus">At5g26210</name>
    <name type="ORF">F9D12.13</name>
    <name type="ORF">T19G15_60</name>
</gene>
<reference key="1">
    <citation type="journal article" date="2000" name="Nature">
        <title>Sequence and analysis of chromosome 5 of the plant Arabidopsis thaliana.</title>
        <authorList>
            <person name="Tabata S."/>
            <person name="Kaneko T."/>
            <person name="Nakamura Y."/>
            <person name="Kotani H."/>
            <person name="Kato T."/>
            <person name="Asamizu E."/>
            <person name="Miyajima N."/>
            <person name="Sasamoto S."/>
            <person name="Kimura T."/>
            <person name="Hosouchi T."/>
            <person name="Kawashima K."/>
            <person name="Kohara M."/>
            <person name="Matsumoto M."/>
            <person name="Matsuno A."/>
            <person name="Muraki A."/>
            <person name="Nakayama S."/>
            <person name="Nakazaki N."/>
            <person name="Naruo K."/>
            <person name="Okumura S."/>
            <person name="Shinpo S."/>
            <person name="Takeuchi C."/>
            <person name="Wada T."/>
            <person name="Watanabe A."/>
            <person name="Yamada M."/>
            <person name="Yasuda M."/>
            <person name="Sato S."/>
            <person name="de la Bastide M."/>
            <person name="Huang E."/>
            <person name="Spiegel L."/>
            <person name="Gnoj L."/>
            <person name="O'Shaughnessy A."/>
            <person name="Preston R."/>
            <person name="Habermann K."/>
            <person name="Murray J."/>
            <person name="Johnson D."/>
            <person name="Rohlfing T."/>
            <person name="Nelson J."/>
            <person name="Stoneking T."/>
            <person name="Pepin K."/>
            <person name="Spieth J."/>
            <person name="Sekhon M."/>
            <person name="Armstrong J."/>
            <person name="Becker M."/>
            <person name="Belter E."/>
            <person name="Cordum H."/>
            <person name="Cordes M."/>
            <person name="Courtney L."/>
            <person name="Courtney W."/>
            <person name="Dante M."/>
            <person name="Du H."/>
            <person name="Edwards J."/>
            <person name="Fryman J."/>
            <person name="Haakensen B."/>
            <person name="Lamar E."/>
            <person name="Latreille P."/>
            <person name="Leonard S."/>
            <person name="Meyer R."/>
            <person name="Mulvaney E."/>
            <person name="Ozersky P."/>
            <person name="Riley A."/>
            <person name="Strowmatt C."/>
            <person name="Wagner-McPherson C."/>
            <person name="Wollam A."/>
            <person name="Yoakum M."/>
            <person name="Bell M."/>
            <person name="Dedhia N."/>
            <person name="Parnell L."/>
            <person name="Shah R."/>
            <person name="Rodriguez M."/>
            <person name="Hoon See L."/>
            <person name="Vil D."/>
            <person name="Baker J."/>
            <person name="Kirchoff K."/>
            <person name="Toth K."/>
            <person name="King L."/>
            <person name="Bahret A."/>
            <person name="Miller B."/>
            <person name="Marra M.A."/>
            <person name="Martienssen R."/>
            <person name="McCombie W.R."/>
            <person name="Wilson R.K."/>
            <person name="Murphy G."/>
            <person name="Bancroft I."/>
            <person name="Volckaert G."/>
            <person name="Wambutt R."/>
            <person name="Duesterhoeft A."/>
            <person name="Stiekema W."/>
            <person name="Pohl T."/>
            <person name="Entian K.-D."/>
            <person name="Terryn N."/>
            <person name="Hartley N."/>
            <person name="Bent E."/>
            <person name="Johnson S."/>
            <person name="Langham S.-A."/>
            <person name="McCullagh B."/>
            <person name="Robben J."/>
            <person name="Grymonprez B."/>
            <person name="Zimmermann W."/>
            <person name="Ramsperger U."/>
            <person name="Wedler H."/>
            <person name="Balke K."/>
            <person name="Wedler E."/>
            <person name="Peters S."/>
            <person name="van Staveren M."/>
            <person name="Dirkse W."/>
            <person name="Mooijman P."/>
            <person name="Klein Lankhorst R."/>
            <person name="Weitzenegger T."/>
            <person name="Bothe G."/>
            <person name="Rose M."/>
            <person name="Hauf J."/>
            <person name="Berneiser S."/>
            <person name="Hempel S."/>
            <person name="Feldpausch M."/>
            <person name="Lamberth S."/>
            <person name="Villarroel R."/>
            <person name="Gielen J."/>
            <person name="Ardiles W."/>
            <person name="Bents O."/>
            <person name="Lemcke K."/>
            <person name="Kolesov G."/>
            <person name="Mayer K.F.X."/>
            <person name="Rudd S."/>
            <person name="Schoof H."/>
            <person name="Schueller C."/>
            <person name="Zaccaria P."/>
            <person name="Mewes H.-W."/>
            <person name="Bevan M."/>
            <person name="Fransz P.F."/>
        </authorList>
    </citation>
    <scope>NUCLEOTIDE SEQUENCE [LARGE SCALE GENOMIC DNA]</scope>
    <source>
        <strain>cv. Columbia</strain>
    </source>
</reference>
<reference key="2">
    <citation type="journal article" date="2017" name="Plant J.">
        <title>Araport11: a complete reannotation of the Arabidopsis thaliana reference genome.</title>
        <authorList>
            <person name="Cheng C.Y."/>
            <person name="Krishnakumar V."/>
            <person name="Chan A.P."/>
            <person name="Thibaud-Nissen F."/>
            <person name="Schobel S."/>
            <person name="Town C.D."/>
        </authorList>
    </citation>
    <scope>GENOME REANNOTATION</scope>
    <source>
        <strain>cv. Columbia</strain>
    </source>
</reference>
<reference key="3">
    <citation type="submission" date="2006-02" db="EMBL/GenBank/DDBJ databases">
        <title>Arabidopsis ORF clones.</title>
        <authorList>
            <person name="Shinn P."/>
            <person name="Chen H."/>
            <person name="Kim C.J."/>
            <person name="Ecker J.R."/>
        </authorList>
    </citation>
    <scope>NUCLEOTIDE SEQUENCE [LARGE SCALE MRNA]</scope>
    <source>
        <strain>cv. Columbia</strain>
    </source>
</reference>
<reference key="4">
    <citation type="submission" date="2006-07" db="EMBL/GenBank/DDBJ databases">
        <title>Large-scale analysis of RIKEN Arabidopsis full-length (RAFL) cDNAs.</title>
        <authorList>
            <person name="Totoki Y."/>
            <person name="Seki M."/>
            <person name="Ishida J."/>
            <person name="Nakajima M."/>
            <person name="Enju A."/>
            <person name="Kamiya A."/>
            <person name="Narusaka M."/>
            <person name="Shin-i T."/>
            <person name="Nakagawa M."/>
            <person name="Sakamoto N."/>
            <person name="Oishi K."/>
            <person name="Kohara Y."/>
            <person name="Kobayashi M."/>
            <person name="Toyoda A."/>
            <person name="Sakaki Y."/>
            <person name="Sakurai T."/>
            <person name="Iida K."/>
            <person name="Akiyama K."/>
            <person name="Satou M."/>
            <person name="Toyoda T."/>
            <person name="Konagaya A."/>
            <person name="Carninci P."/>
            <person name="Kawai J."/>
            <person name="Hayashizaki Y."/>
            <person name="Shinozaki K."/>
        </authorList>
    </citation>
    <scope>NUCLEOTIDE SEQUENCE [LARGE SCALE MRNA]</scope>
    <source>
        <strain>cv. Columbia</strain>
    </source>
</reference>
<reference key="5">
    <citation type="submission" date="2009-03" db="EMBL/GenBank/DDBJ databases">
        <title>ORF cloning and analysis of Arabidopsis transcription factor genes.</title>
        <authorList>
            <person name="Fujita M."/>
            <person name="Mizukado S."/>
            <person name="Seki M."/>
            <person name="Shinozaki K."/>
            <person name="Mitsuda N."/>
            <person name="Takiguchi Y."/>
            <person name="Takagi M."/>
        </authorList>
    </citation>
    <scope>NUCLEOTIDE SEQUENCE [LARGE SCALE MRNA]</scope>
</reference>
<reference key="6">
    <citation type="submission" date="2002-03" db="EMBL/GenBank/DDBJ databases">
        <title>Full-length cDNA from Arabidopsis thaliana.</title>
        <authorList>
            <person name="Brover V.V."/>
            <person name="Troukhan M.E."/>
            <person name="Alexandrov N.A."/>
            <person name="Lu Y.-P."/>
            <person name="Flavell R.B."/>
            <person name="Feldmann K.A."/>
        </authorList>
    </citation>
    <scope>NUCLEOTIDE SEQUENCE [LARGE SCALE MRNA]</scope>
</reference>
<reference key="7">
    <citation type="journal article" date="2012" name="Mol. Cell. Proteomics">
        <title>Comparative large-scale characterisation of plant vs. mammal proteins reveals similar and idiosyncratic N-alpha acetylation features.</title>
        <authorList>
            <person name="Bienvenut W.V."/>
            <person name="Sumpton D."/>
            <person name="Martinez A."/>
            <person name="Lilla S."/>
            <person name="Espagne C."/>
            <person name="Meinnel T."/>
            <person name="Giglione C."/>
        </authorList>
    </citation>
    <scope>ACETYLATION [LARGE SCALE ANALYSIS] AT MET-1</scope>
    <scope>IDENTIFICATION BY MASS SPECTROMETRY [LARGE SCALE ANALYSIS]</scope>
</reference>
<reference key="8">
    <citation type="submission" date="2004-11" db="PDB data bank">
        <title>Solution structure of PHD domain in nucleic acid binding protein-like NP_197993.</title>
        <authorList>
            <consortium name="RIKEN structural genomics initiative (RSGI)"/>
        </authorList>
    </citation>
    <scope>STRUCTURE BY NMR OF 201-251</scope>
</reference>
<reference key="9">
    <citation type="journal article" date="2009" name="Plant J.">
        <title>Arabidopsis ING and Alfin1-like protein families localize to the nucleus and bind to H3K4me3/2 via plant homeodomain fingers.</title>
        <authorList>
            <person name="Lee W.Y."/>
            <person name="Lee D."/>
            <person name="Chung W.I."/>
            <person name="Kwon C.S."/>
        </authorList>
    </citation>
    <scope>GENE FAMILY</scope>
    <scope>DOMAIN PHD-TYPE ZINC-FINGER</scope>
    <scope>SUBCELLULAR LOCATION</scope>
    <scope>INTERACTION WITH HISTONES H3K4ME3 AND H3K4ME2</scope>
    <scope>TISSUE SPECIFICITY</scope>
</reference>
<protein>
    <recommendedName>
        <fullName>PHD finger protein ALFIN-LIKE 4</fullName>
        <shortName>Protein AL4</shortName>
    </recommendedName>
</protein>
<feature type="chain" id="PRO_0000059336" description="PHD finger protein ALFIN-LIKE 4">
    <location>
        <begin position="1"/>
        <end position="255"/>
    </location>
</feature>
<feature type="zinc finger region" description="PHD-type" evidence="2">
    <location>
        <begin position="199"/>
        <end position="251"/>
    </location>
</feature>
<feature type="region of interest" description="Disordered" evidence="3">
    <location>
        <begin position="145"/>
        <end position="200"/>
    </location>
</feature>
<feature type="compositionally biased region" description="Low complexity" evidence="3">
    <location>
        <begin position="150"/>
        <end position="160"/>
    </location>
</feature>
<feature type="compositionally biased region" description="Basic and acidic residues" evidence="3">
    <location>
        <begin position="165"/>
        <end position="178"/>
    </location>
</feature>
<feature type="compositionally biased region" description="Acidic residues" evidence="3">
    <location>
        <begin position="179"/>
        <end position="198"/>
    </location>
</feature>
<feature type="site" description="Histone H3K4me3 binding" evidence="1">
    <location>
        <position position="209"/>
    </location>
</feature>
<feature type="site" description="Histone H3K4me3 binding" evidence="1">
    <location>
        <position position="215"/>
    </location>
</feature>
<feature type="site" description="Histone H3K4me3 binding" evidence="1">
    <location>
        <position position="219"/>
    </location>
</feature>
<feature type="site" description="Histone H3K4me3 binding" evidence="1">
    <location>
        <position position="224"/>
    </location>
</feature>
<feature type="modified residue" description="N-acetylmethionine" evidence="6">
    <location>
        <position position="1"/>
    </location>
</feature>
<feature type="sequence conflict" description="In Ref. 4; BAE98515." evidence="5" ref="4">
    <original>E</original>
    <variation>G</variation>
    <location>
        <position position="186"/>
    </location>
</feature>
<feature type="strand" evidence="7">
    <location>
        <begin position="203"/>
        <end position="205"/>
    </location>
</feature>
<feature type="strand" evidence="7">
    <location>
        <begin position="211"/>
        <end position="213"/>
    </location>
</feature>
<feature type="strand" evidence="7">
    <location>
        <begin position="215"/>
        <end position="217"/>
    </location>
</feature>
<feature type="strand" evidence="7">
    <location>
        <begin position="219"/>
        <end position="221"/>
    </location>
</feature>
<feature type="strand" evidence="7">
    <location>
        <begin position="224"/>
        <end position="226"/>
    </location>
</feature>
<feature type="turn" evidence="7">
    <location>
        <begin position="227"/>
        <end position="231"/>
    </location>
</feature>
<feature type="helix" evidence="7">
    <location>
        <begin position="236"/>
        <end position="239"/>
    </location>
</feature>
<feature type="helix" evidence="7">
    <location>
        <begin position="246"/>
        <end position="249"/>
    </location>
</feature>
<accession>O81488</accession>
<accession>Q0WWI3</accession>
<accession>Q2HIV6</accession>
<accession>Q8LBJ5</accession>
<comment type="function">
    <text evidence="1">Histone-binding component that specifically recognizes H3 tails trimethylated on 'Lys-4' (H3K4me3), which mark transcription start sites of virtually all active genes.</text>
</comment>
<comment type="subunit">
    <text evidence="4">Interacts with H3K4me3 and to a lesser extent with H3K4me2.</text>
</comment>
<comment type="subcellular location">
    <subcellularLocation>
        <location evidence="4">Nucleus</location>
    </subcellularLocation>
</comment>
<comment type="tissue specificity">
    <text evidence="4">Ubiquitously expressed.</text>
</comment>
<comment type="domain">
    <text evidence="4">The PHD-type zinc finger mediates the binding to H3K4me3.</text>
</comment>
<comment type="similarity">
    <text evidence="5">Belongs to the Alfin family.</text>
</comment>
<comment type="sequence caution" evidence="5">
    <conflict type="erroneous gene model prediction">
        <sequence resource="EMBL-CDS" id="AAC26230"/>
    </conflict>
</comment>
<organism>
    <name type="scientific">Arabidopsis thaliana</name>
    <name type="common">Mouse-ear cress</name>
    <dbReference type="NCBI Taxonomy" id="3702"/>
    <lineage>
        <taxon>Eukaryota</taxon>
        <taxon>Viridiplantae</taxon>
        <taxon>Streptophyta</taxon>
        <taxon>Embryophyta</taxon>
        <taxon>Tracheophyta</taxon>
        <taxon>Spermatophyta</taxon>
        <taxon>Magnoliopsida</taxon>
        <taxon>eudicotyledons</taxon>
        <taxon>Gunneridae</taxon>
        <taxon>Pentapetalae</taxon>
        <taxon>rosids</taxon>
        <taxon>malvids</taxon>
        <taxon>Brassicales</taxon>
        <taxon>Brassicaceae</taxon>
        <taxon>Camelineae</taxon>
        <taxon>Arabidopsis</taxon>
    </lineage>
</organism>
<sequence>MEAGGAYNPRTVEEVFRDFKGRRAGMIKALTTDVQEFFRLCDPEKENLCLYGHPNEHWEVNLPAEEVPPELPEPVLGINFARDGMAEKDWLSLVAVHSDAWLLAVAFFFGARFGFDKADRKRLFNMVNDLPTIFEVVAGTAKKQGKDKSSVSNNSSNRSKSSSKRGSESRAKFSKPEPKDDEEEEEEGVEEEDEDEQGETQCGACGESYAADEFWICCDLCEMWFHGKCVKITPARAEHIKQYKCPSCSNKRARS</sequence>